<organism>
    <name type="scientific">Pongo abelii</name>
    <name type="common">Sumatran orangutan</name>
    <name type="synonym">Pongo pygmaeus abelii</name>
    <dbReference type="NCBI Taxonomy" id="9601"/>
    <lineage>
        <taxon>Eukaryota</taxon>
        <taxon>Metazoa</taxon>
        <taxon>Chordata</taxon>
        <taxon>Craniata</taxon>
        <taxon>Vertebrata</taxon>
        <taxon>Euteleostomi</taxon>
        <taxon>Mammalia</taxon>
        <taxon>Eutheria</taxon>
        <taxon>Euarchontoglires</taxon>
        <taxon>Primates</taxon>
        <taxon>Haplorrhini</taxon>
        <taxon>Catarrhini</taxon>
        <taxon>Hominidae</taxon>
        <taxon>Pongo</taxon>
    </lineage>
</organism>
<keyword id="KW-0472">Membrane</keyword>
<keyword id="KW-1185">Reference proteome</keyword>
<keyword id="KW-0812">Transmembrane</keyword>
<keyword id="KW-1133">Transmembrane helix</keyword>
<comment type="function">
    <text evidence="1">Negatively regulates growth hormone (GH) receptor cell surface expression in liver. May play a role in liver resistance to GH during periods of reduced nutrient availability (By similarity).</text>
</comment>
<comment type="subcellular location">
    <subcellularLocation>
        <location evidence="3">Membrane</location>
        <topology evidence="3">Multi-pass membrane protein</topology>
    </subcellularLocation>
</comment>
<comment type="similarity">
    <text evidence="3">Belongs to the OB-RGRP/VPS55 family.</text>
</comment>
<feature type="chain" id="PRO_0000215199" description="Leptin receptor overlapping transcript-like 1">
    <location>
        <begin position="1"/>
        <end position="131"/>
    </location>
</feature>
<feature type="transmembrane region" description="Helical" evidence="2">
    <location>
        <begin position="7"/>
        <end position="27"/>
    </location>
</feature>
<feature type="transmembrane region" description="Helical" evidence="2">
    <location>
        <begin position="32"/>
        <end position="52"/>
    </location>
</feature>
<feature type="transmembrane region" description="Helical" evidence="2">
    <location>
        <begin position="69"/>
        <end position="89"/>
    </location>
</feature>
<feature type="transmembrane region" description="Helical" evidence="2">
    <location>
        <begin position="100"/>
        <end position="120"/>
    </location>
</feature>
<reference key="1">
    <citation type="submission" date="2004-11" db="EMBL/GenBank/DDBJ databases">
        <authorList>
            <consortium name="The German cDNA consortium"/>
        </authorList>
    </citation>
    <scope>NUCLEOTIDE SEQUENCE [LARGE SCALE MRNA]</scope>
    <source>
        <tissue>Kidney</tissue>
    </source>
</reference>
<name>LERL1_PONAB</name>
<evidence type="ECO:0000250" key="1"/>
<evidence type="ECO:0000255" key="2"/>
<evidence type="ECO:0000305" key="3"/>
<gene>
    <name type="primary">LEPROTL1</name>
</gene>
<accession>Q5RDE9</accession>
<sequence length="131" mass="14428">MAGIKALISLSFGGAIGLMFLMLGCALPIYNKYWPLFVLFFYILSPIPYCIARRLVDDTDAMSNACKELAIFLTTGIVVSAFGLPIVFARAHLIEWGACALVLTGNTVIFATILGFFLVFGSNDDFSWQQW</sequence>
<dbReference type="EMBL" id="CR857963">
    <property type="protein sequence ID" value="CAH90208.1"/>
    <property type="molecule type" value="mRNA"/>
</dbReference>
<dbReference type="RefSeq" id="NP_001125079.1">
    <property type="nucleotide sequence ID" value="NM_001131607.1"/>
</dbReference>
<dbReference type="SMR" id="Q5RDE9"/>
<dbReference type="FunCoup" id="Q5RDE9">
    <property type="interactions" value="1726"/>
</dbReference>
<dbReference type="STRING" id="9601.ENSPPYP00000020720"/>
<dbReference type="Ensembl" id="ENSPPYT00000040774.1">
    <property type="protein sequence ID" value="ENSPPYP00000025896.1"/>
    <property type="gene ID" value="ENSPPYG00000018484.3"/>
</dbReference>
<dbReference type="GeneID" id="100171961"/>
<dbReference type="KEGG" id="pon:100171961"/>
<dbReference type="CTD" id="23484"/>
<dbReference type="eggNOG" id="KOG2174">
    <property type="taxonomic scope" value="Eukaryota"/>
</dbReference>
<dbReference type="GeneTree" id="ENSGT00390000006503"/>
<dbReference type="HOGENOM" id="CLU_134810_2_2_1"/>
<dbReference type="InParanoid" id="Q5RDE9"/>
<dbReference type="OMA" id="ICARCAN"/>
<dbReference type="OrthoDB" id="14246at2759"/>
<dbReference type="TreeFam" id="TF313689"/>
<dbReference type="Proteomes" id="UP000001595">
    <property type="component" value="Chromosome 8"/>
</dbReference>
<dbReference type="GO" id="GO:0005768">
    <property type="term" value="C:endosome"/>
    <property type="evidence" value="ECO:0007669"/>
    <property type="project" value="TreeGrafter"/>
</dbReference>
<dbReference type="GO" id="GO:0016020">
    <property type="term" value="C:membrane"/>
    <property type="evidence" value="ECO:0007669"/>
    <property type="project" value="UniProtKB-SubCell"/>
</dbReference>
<dbReference type="GO" id="GO:0032511">
    <property type="term" value="P:late endosome to vacuole transport via multivesicular body sorting pathway"/>
    <property type="evidence" value="ECO:0007669"/>
    <property type="project" value="TreeGrafter"/>
</dbReference>
<dbReference type="GO" id="GO:0060400">
    <property type="term" value="P:negative regulation of growth hormone receptor signaling pathway"/>
    <property type="evidence" value="ECO:0007669"/>
    <property type="project" value="TreeGrafter"/>
</dbReference>
<dbReference type="InterPro" id="IPR007262">
    <property type="entry name" value="Vps55/LEPROT"/>
</dbReference>
<dbReference type="PANTHER" id="PTHR12050:SF4">
    <property type="entry name" value="LEPTIN RECEPTOR OVERLAPPING TRANSCRIPT-LIKE 1"/>
    <property type="match status" value="1"/>
</dbReference>
<dbReference type="PANTHER" id="PTHR12050">
    <property type="entry name" value="LEPTIN RECEPTOR-RELATED"/>
    <property type="match status" value="1"/>
</dbReference>
<dbReference type="Pfam" id="PF04133">
    <property type="entry name" value="Vps55"/>
    <property type="match status" value="1"/>
</dbReference>
<proteinExistence type="evidence at transcript level"/>
<protein>
    <recommendedName>
        <fullName>Leptin receptor overlapping transcript-like 1</fullName>
    </recommendedName>
</protein>